<comment type="function">
    <text evidence="1">DNA-dependent RNA polymerase catalyzes the transcription of DNA into RNA using the four ribonucleoside triphosphates as substrates. Common component of RNA polymerases I, II and III which synthesize ribosomal RNA precursors, mRNA precursors and many functional non-coding RNAs, and a small RNAs, such as 5S rRNA and tRNAs, respectively. Pol II is the central component of the basal RNA polymerase II transcription machinery. Pols are composed of mobile elements that move relative to each other. In Pol II, RBP10 is part of the core element with the central large cleft (By similarity).</text>
</comment>
<comment type="subunit">
    <text evidence="1">Component of the RNA polymerase I (Pol I), RNA polymerase II (Pol II) and RNA polymerase III (Pol III) complexes consisting of 14, 12 and 17 subunits, respectively.</text>
</comment>
<comment type="subcellular location">
    <subcellularLocation>
        <location evidence="1">Nucleus</location>
    </subcellularLocation>
</comment>
<comment type="similarity">
    <text evidence="3">Belongs to the archaeal Rpo10/eukaryotic RPB10 RNA polymerase subunit family.</text>
</comment>
<organism>
    <name type="scientific">Schizosaccharomyces pombe (strain 972 / ATCC 24843)</name>
    <name type="common">Fission yeast</name>
    <dbReference type="NCBI Taxonomy" id="284812"/>
    <lineage>
        <taxon>Eukaryota</taxon>
        <taxon>Fungi</taxon>
        <taxon>Dikarya</taxon>
        <taxon>Ascomycota</taxon>
        <taxon>Taphrinomycotina</taxon>
        <taxon>Schizosaccharomycetes</taxon>
        <taxon>Schizosaccharomycetales</taxon>
        <taxon>Schizosaccharomycetaceae</taxon>
        <taxon>Schizosaccharomyces</taxon>
    </lineage>
</organism>
<feature type="chain" id="PRO_0000121341" description="DNA-directed RNA polymerases I, II, and III subunit RPABC5">
    <location>
        <begin position="1"/>
        <end position="71"/>
    </location>
</feature>
<feature type="binding site" evidence="2 4">
    <location>
        <position position="7"/>
    </location>
    <ligand>
        <name>Zn(2+)</name>
        <dbReference type="ChEBI" id="CHEBI:29105"/>
    </ligand>
</feature>
<feature type="binding site" evidence="2 4">
    <location>
        <position position="10"/>
    </location>
    <ligand>
        <name>Zn(2+)</name>
        <dbReference type="ChEBI" id="CHEBI:29105"/>
    </ligand>
</feature>
<feature type="binding site" evidence="2 4">
    <location>
        <position position="44"/>
    </location>
    <ligand>
        <name>Zn(2+)</name>
        <dbReference type="ChEBI" id="CHEBI:29105"/>
    </ligand>
</feature>
<feature type="binding site" evidence="2 4">
    <location>
        <position position="45"/>
    </location>
    <ligand>
        <name>Zn(2+)</name>
        <dbReference type="ChEBI" id="CHEBI:29105"/>
    </ligand>
</feature>
<feature type="strand" evidence="5">
    <location>
        <begin position="8"/>
        <end position="10"/>
    </location>
</feature>
<feature type="helix" evidence="5">
    <location>
        <begin position="18"/>
        <end position="26"/>
    </location>
</feature>
<feature type="helix" evidence="5">
    <location>
        <begin position="31"/>
        <end position="37"/>
    </location>
</feature>
<feature type="helix" evidence="5">
    <location>
        <begin position="43"/>
        <end position="50"/>
    </location>
</feature>
<feature type="helix" evidence="5">
    <location>
        <begin position="55"/>
        <end position="59"/>
    </location>
</feature>
<evidence type="ECO:0000250" key="1"/>
<evidence type="ECO:0000269" key="2">
    <source>
    </source>
</evidence>
<evidence type="ECO:0000305" key="3"/>
<evidence type="ECO:0007744" key="4">
    <source>
        <dbReference type="PDB" id="3H0G"/>
    </source>
</evidence>
<evidence type="ECO:0007829" key="5">
    <source>
        <dbReference type="PDB" id="8QSZ"/>
    </source>
</evidence>
<protein>
    <recommendedName>
        <fullName>DNA-directed RNA polymerases I, II, and III subunit RPABC5</fullName>
        <shortName>RNA polymerases I, II, and III subunit ABC5</shortName>
    </recommendedName>
    <alternativeName>
        <fullName>ABC10-beta</fullName>
    </alternativeName>
    <alternativeName>
        <fullName>DNA-directed RNA polymerases I, II, and III 8.3 kDa polypeptide</fullName>
    </alternativeName>
    <alternativeName>
        <fullName>RPC8</fullName>
    </alternativeName>
</protein>
<keyword id="KW-0002">3D-structure</keyword>
<keyword id="KW-0240">DNA-directed RNA polymerase</keyword>
<keyword id="KW-0479">Metal-binding</keyword>
<keyword id="KW-0539">Nucleus</keyword>
<keyword id="KW-1185">Reference proteome</keyword>
<keyword id="KW-0804">Transcription</keyword>
<keyword id="KW-0862">Zinc</keyword>
<name>RPAB5_SCHPO</name>
<reference key="1">
    <citation type="journal article" date="1996" name="Bioorg. Khim.">
        <title>Three regions of Rpb10 mini-subunit of nuclear RNA polymerases are strictly conserved in all eukaryotes.</title>
        <authorList>
            <person name="Shpakovskii G.V."/>
            <person name="Lebedenko E.N."/>
        </authorList>
    </citation>
    <scope>NUCLEOTIDE SEQUENCE [GENOMIC DNA / MRNA]</scope>
    <source>
        <strain>972 / ATCC 24843</strain>
    </source>
</reference>
<reference key="2">
    <citation type="journal article" date="1997" name="Gene">
        <title>Gene organization and protein sequence of the small subunits of Schizosaccharomyces pombe RNA polymerase II.</title>
        <authorList>
            <person name="Sakurai H."/>
            <person name="Ishihama A."/>
        </authorList>
    </citation>
    <scope>NUCLEOTIDE SEQUENCE [GENOMIC DNA]</scope>
    <source>
        <strain>JY741</strain>
    </source>
</reference>
<reference key="3">
    <citation type="journal article" date="1998" name="Mol. Biol. (Mosk.)">
        <title>Exon-intron organization rpb10+ and rpc10+ genes of Schizosaccharomyces pombe, coding for mini-subunits of nuclear RNA-polymerase I-III.</title>
        <authorList>
            <person name="Shpakovskii G.V."/>
            <person name="Proshkin S.A."/>
            <person name="Lebedenko E.N."/>
        </authorList>
    </citation>
    <scope>NUCLEOTIDE SEQUENCE [GENOMIC DNA]</scope>
    <source>
        <strain>972 / ATCC 24843</strain>
    </source>
</reference>
<reference key="4">
    <citation type="journal article" date="2002" name="Nature">
        <title>The genome sequence of Schizosaccharomyces pombe.</title>
        <authorList>
            <person name="Wood V."/>
            <person name="Gwilliam R."/>
            <person name="Rajandream M.A."/>
            <person name="Lyne M.H."/>
            <person name="Lyne R."/>
            <person name="Stewart A."/>
            <person name="Sgouros J.G."/>
            <person name="Peat N."/>
            <person name="Hayles J."/>
            <person name="Baker S.G."/>
            <person name="Basham D."/>
            <person name="Bowman S."/>
            <person name="Brooks K."/>
            <person name="Brown D."/>
            <person name="Brown S."/>
            <person name="Chillingworth T."/>
            <person name="Churcher C.M."/>
            <person name="Collins M."/>
            <person name="Connor R."/>
            <person name="Cronin A."/>
            <person name="Davis P."/>
            <person name="Feltwell T."/>
            <person name="Fraser A."/>
            <person name="Gentles S."/>
            <person name="Goble A."/>
            <person name="Hamlin N."/>
            <person name="Harris D.E."/>
            <person name="Hidalgo J."/>
            <person name="Hodgson G."/>
            <person name="Holroyd S."/>
            <person name="Hornsby T."/>
            <person name="Howarth S."/>
            <person name="Huckle E.J."/>
            <person name="Hunt S."/>
            <person name="Jagels K."/>
            <person name="James K.D."/>
            <person name="Jones L."/>
            <person name="Jones M."/>
            <person name="Leather S."/>
            <person name="McDonald S."/>
            <person name="McLean J."/>
            <person name="Mooney P."/>
            <person name="Moule S."/>
            <person name="Mungall K.L."/>
            <person name="Murphy L.D."/>
            <person name="Niblett D."/>
            <person name="Odell C."/>
            <person name="Oliver K."/>
            <person name="O'Neil S."/>
            <person name="Pearson D."/>
            <person name="Quail M.A."/>
            <person name="Rabbinowitsch E."/>
            <person name="Rutherford K.M."/>
            <person name="Rutter S."/>
            <person name="Saunders D."/>
            <person name="Seeger K."/>
            <person name="Sharp S."/>
            <person name="Skelton J."/>
            <person name="Simmonds M.N."/>
            <person name="Squares R."/>
            <person name="Squares S."/>
            <person name="Stevens K."/>
            <person name="Taylor K."/>
            <person name="Taylor R.G."/>
            <person name="Tivey A."/>
            <person name="Walsh S.V."/>
            <person name="Warren T."/>
            <person name="Whitehead S."/>
            <person name="Woodward J.R."/>
            <person name="Volckaert G."/>
            <person name="Aert R."/>
            <person name="Robben J."/>
            <person name="Grymonprez B."/>
            <person name="Weltjens I."/>
            <person name="Vanstreels E."/>
            <person name="Rieger M."/>
            <person name="Schaefer M."/>
            <person name="Mueller-Auer S."/>
            <person name="Gabel C."/>
            <person name="Fuchs M."/>
            <person name="Duesterhoeft A."/>
            <person name="Fritzc C."/>
            <person name="Holzer E."/>
            <person name="Moestl D."/>
            <person name="Hilbert H."/>
            <person name="Borzym K."/>
            <person name="Langer I."/>
            <person name="Beck A."/>
            <person name="Lehrach H."/>
            <person name="Reinhardt R."/>
            <person name="Pohl T.M."/>
            <person name="Eger P."/>
            <person name="Zimmermann W."/>
            <person name="Wedler H."/>
            <person name="Wambutt R."/>
            <person name="Purnelle B."/>
            <person name="Goffeau A."/>
            <person name="Cadieu E."/>
            <person name="Dreano S."/>
            <person name="Gloux S."/>
            <person name="Lelaure V."/>
            <person name="Mottier S."/>
            <person name="Galibert F."/>
            <person name="Aves S.J."/>
            <person name="Xiang Z."/>
            <person name="Hunt C."/>
            <person name="Moore K."/>
            <person name="Hurst S.M."/>
            <person name="Lucas M."/>
            <person name="Rochet M."/>
            <person name="Gaillardin C."/>
            <person name="Tallada V.A."/>
            <person name="Garzon A."/>
            <person name="Thode G."/>
            <person name="Daga R.R."/>
            <person name="Cruzado L."/>
            <person name="Jimenez J."/>
            <person name="Sanchez M."/>
            <person name="del Rey F."/>
            <person name="Benito J."/>
            <person name="Dominguez A."/>
            <person name="Revuelta J.L."/>
            <person name="Moreno S."/>
            <person name="Armstrong J."/>
            <person name="Forsburg S.L."/>
            <person name="Cerutti L."/>
            <person name="Lowe T."/>
            <person name="McCombie W.R."/>
            <person name="Paulsen I."/>
            <person name="Potashkin J."/>
            <person name="Shpakovski G.V."/>
            <person name="Ussery D."/>
            <person name="Barrell B.G."/>
            <person name="Nurse P."/>
        </authorList>
    </citation>
    <scope>NUCLEOTIDE SEQUENCE [LARGE SCALE GENOMIC DNA]</scope>
    <source>
        <strain>972 / ATCC 24843</strain>
    </source>
</reference>
<reference key="5">
    <citation type="journal article" date="2009" name="Proc. Natl. Acad. Sci. U.S.A.">
        <title>Schizosacharomyces pombe RNA polymerase II at 3.6-A resolution.</title>
        <authorList>
            <person name="Spaahr H."/>
            <person name="Calero G."/>
            <person name="Bushnell D.A."/>
            <person name="Kornberg R.D."/>
        </authorList>
    </citation>
    <scope>X-RAY CRYSTALLOGRAPHY (3.6 ANGSTROMS) OF THE RNA POL II CORE COMPLEX IN COMPLEX WITH ZINC</scope>
</reference>
<sequence length="71" mass="8276">MIIPIRCFSCGKVIGDKWDTYLTLLQEDNTEGEALDKLGLQRYCCRRMILTHVDLIEKLLCYNPLSKQKNL</sequence>
<accession>O13877</accession>
<accession>O14458</accession>
<gene>
    <name type="primary">rpb10</name>
    <name type="ORF">SPAC1B3.12c</name>
</gene>
<dbReference type="EMBL" id="X95733">
    <property type="protein sequence ID" value="CAA65049.1"/>
    <property type="molecule type" value="mRNA"/>
</dbReference>
<dbReference type="EMBL" id="U80219">
    <property type="protein sequence ID" value="AAC49842.1"/>
    <property type="molecule type" value="mRNA"/>
</dbReference>
<dbReference type="EMBL" id="D89596">
    <property type="protein sequence ID" value="BAA22805.1"/>
    <property type="molecule type" value="Genomic_DNA"/>
</dbReference>
<dbReference type="EMBL" id="AF027818">
    <property type="protein sequence ID" value="AAC16895.1"/>
    <property type="molecule type" value="Genomic_DNA"/>
</dbReference>
<dbReference type="EMBL" id="CU329670">
    <property type="protein sequence ID" value="CAB11246.1"/>
    <property type="molecule type" value="Genomic_DNA"/>
</dbReference>
<dbReference type="PIR" id="T43545">
    <property type="entry name" value="T43545"/>
</dbReference>
<dbReference type="RefSeq" id="NP_594797.1">
    <property type="nucleotide sequence ID" value="NM_001020225.2"/>
</dbReference>
<dbReference type="PDB" id="3H0G">
    <property type="method" value="X-ray"/>
    <property type="resolution" value="3.65 A"/>
    <property type="chains" value="J/V=1-71"/>
</dbReference>
<dbReference type="PDB" id="5U0S">
    <property type="method" value="EM"/>
    <property type="resolution" value="7.80 A"/>
    <property type="chains" value="j=1-71"/>
</dbReference>
<dbReference type="PDB" id="7AOC">
    <property type="method" value="EM"/>
    <property type="resolution" value="3.84 A"/>
    <property type="chains" value="J=1-71"/>
</dbReference>
<dbReference type="PDB" id="7AOD">
    <property type="method" value="EM"/>
    <property type="resolution" value="4.50 A"/>
    <property type="chains" value="J/V=1-71"/>
</dbReference>
<dbReference type="PDB" id="7AOE">
    <property type="method" value="EM"/>
    <property type="resolution" value="3.90 A"/>
    <property type="chains" value="J=1-71"/>
</dbReference>
<dbReference type="PDB" id="8QSZ">
    <property type="method" value="EM"/>
    <property type="resolution" value="2.67 A"/>
    <property type="chains" value="J=1-71"/>
</dbReference>
<dbReference type="PDBsum" id="3H0G"/>
<dbReference type="PDBsum" id="5U0S"/>
<dbReference type="PDBsum" id="7AOC"/>
<dbReference type="PDBsum" id="7AOD"/>
<dbReference type="PDBsum" id="7AOE"/>
<dbReference type="PDBsum" id="8QSZ"/>
<dbReference type="EMDB" id="EMD-11840"/>
<dbReference type="EMDB" id="EMD-11841"/>
<dbReference type="EMDB" id="EMD-11842"/>
<dbReference type="EMDB" id="EMD-18643"/>
<dbReference type="EMDB" id="EMD-8480"/>
<dbReference type="SMR" id="O13877"/>
<dbReference type="BioGRID" id="278705">
    <property type="interactions" value="13"/>
</dbReference>
<dbReference type="ComplexPortal" id="CPX-2661">
    <property type="entry name" value="DNA-directed RNA polymerase II complex"/>
</dbReference>
<dbReference type="ComplexPortal" id="CPX-8905">
    <property type="entry name" value="DNA-directed RNA polymerase III complex"/>
</dbReference>
<dbReference type="ComplexPortal" id="CPX-8907">
    <property type="entry name" value="DNA-directed RNA polymerase I complex"/>
</dbReference>
<dbReference type="FunCoup" id="O13877">
    <property type="interactions" value="171"/>
</dbReference>
<dbReference type="IntAct" id="O13877">
    <property type="interactions" value="1"/>
</dbReference>
<dbReference type="STRING" id="284812.O13877"/>
<dbReference type="PaxDb" id="4896-SPAC1B3.12c.1"/>
<dbReference type="EnsemblFungi" id="SPAC1B3.12c.1">
    <property type="protein sequence ID" value="SPAC1B3.12c.1:pep"/>
    <property type="gene ID" value="SPAC1B3.12c"/>
</dbReference>
<dbReference type="GeneID" id="2542233"/>
<dbReference type="KEGG" id="spo:2542233"/>
<dbReference type="PomBase" id="SPAC1B3.12c">
    <property type="gene designation" value="rpb10"/>
</dbReference>
<dbReference type="VEuPathDB" id="FungiDB:SPAC1B3.12c"/>
<dbReference type="eggNOG" id="KOG3497">
    <property type="taxonomic scope" value="Eukaryota"/>
</dbReference>
<dbReference type="HOGENOM" id="CLU_143122_2_1_1"/>
<dbReference type="InParanoid" id="O13877"/>
<dbReference type="OMA" id="YCCRRMF"/>
<dbReference type="PhylomeDB" id="O13877"/>
<dbReference type="Reactome" id="R-SPO-113418">
    <property type="pathway name" value="Formation of the Early Elongation Complex"/>
</dbReference>
<dbReference type="Reactome" id="R-SPO-5578749">
    <property type="pathway name" value="Transcriptional regulation by small RNAs"/>
</dbReference>
<dbReference type="Reactome" id="R-SPO-674695">
    <property type="pathway name" value="RNA Polymerase II Pre-transcription Events"/>
</dbReference>
<dbReference type="Reactome" id="R-SPO-6781823">
    <property type="pathway name" value="Formation of TC-NER Pre-Incision Complex"/>
</dbReference>
<dbReference type="Reactome" id="R-SPO-6782135">
    <property type="pathway name" value="Dual incision in TC-NER"/>
</dbReference>
<dbReference type="Reactome" id="R-SPO-6782210">
    <property type="pathway name" value="Gap-filling DNA repair synthesis and ligation in TC-NER"/>
</dbReference>
<dbReference type="Reactome" id="R-SPO-6796648">
    <property type="pathway name" value="TP53 Regulates Transcription of DNA Repair Genes"/>
</dbReference>
<dbReference type="Reactome" id="R-SPO-6807505">
    <property type="pathway name" value="RNA polymerase II transcribes snRNA genes"/>
</dbReference>
<dbReference type="Reactome" id="R-SPO-72086">
    <property type="pathway name" value="mRNA Capping"/>
</dbReference>
<dbReference type="Reactome" id="R-SPO-72163">
    <property type="pathway name" value="mRNA Splicing - Major Pathway"/>
</dbReference>
<dbReference type="Reactome" id="R-SPO-72203">
    <property type="pathway name" value="Processing of Capped Intron-Containing Pre-mRNA"/>
</dbReference>
<dbReference type="Reactome" id="R-SPO-73762">
    <property type="pathway name" value="RNA Polymerase I Transcription Initiation"/>
</dbReference>
<dbReference type="Reactome" id="R-SPO-73772">
    <property type="pathway name" value="RNA Polymerase I Promoter Escape"/>
</dbReference>
<dbReference type="Reactome" id="R-SPO-73776">
    <property type="pathway name" value="RNA Polymerase II Promoter Escape"/>
</dbReference>
<dbReference type="Reactome" id="R-SPO-73779">
    <property type="pathway name" value="RNA Polymerase II Transcription Pre-Initiation And Promoter Opening"/>
</dbReference>
<dbReference type="Reactome" id="R-SPO-75953">
    <property type="pathway name" value="RNA Polymerase II Transcription Initiation"/>
</dbReference>
<dbReference type="Reactome" id="R-SPO-76042">
    <property type="pathway name" value="RNA Polymerase II Transcription Initiation And Promoter Clearance"/>
</dbReference>
<dbReference type="Reactome" id="R-SPO-76061">
    <property type="pathway name" value="RNA Polymerase III Transcription Initiation From Type 1 Promoter"/>
</dbReference>
<dbReference type="Reactome" id="R-SPO-76066">
    <property type="pathway name" value="RNA Polymerase III Transcription Initiation From Type 2 Promoter"/>
</dbReference>
<dbReference type="Reactome" id="R-SPO-77075">
    <property type="pathway name" value="RNA Pol II CTD phosphorylation and interaction with CE"/>
</dbReference>
<dbReference type="Reactome" id="R-SPO-9018519">
    <property type="pathway name" value="Estrogen-dependent gene expression"/>
</dbReference>
<dbReference type="EvolutionaryTrace" id="O13877"/>
<dbReference type="PRO" id="PR:O13877"/>
<dbReference type="Proteomes" id="UP000002485">
    <property type="component" value="Chromosome I"/>
</dbReference>
<dbReference type="GO" id="GO:0005829">
    <property type="term" value="C:cytosol"/>
    <property type="evidence" value="ECO:0007005"/>
    <property type="project" value="PomBase"/>
</dbReference>
<dbReference type="GO" id="GO:0005730">
    <property type="term" value="C:nucleolus"/>
    <property type="evidence" value="ECO:0007005"/>
    <property type="project" value="PomBase"/>
</dbReference>
<dbReference type="GO" id="GO:0005634">
    <property type="term" value="C:nucleus"/>
    <property type="evidence" value="ECO:0007005"/>
    <property type="project" value="PomBase"/>
</dbReference>
<dbReference type="GO" id="GO:0005736">
    <property type="term" value="C:RNA polymerase I complex"/>
    <property type="evidence" value="ECO:0000314"/>
    <property type="project" value="PomBase"/>
</dbReference>
<dbReference type="GO" id="GO:0005665">
    <property type="term" value="C:RNA polymerase II, core complex"/>
    <property type="evidence" value="ECO:0000314"/>
    <property type="project" value="PomBase"/>
</dbReference>
<dbReference type="GO" id="GO:0016591">
    <property type="term" value="C:RNA polymerase II, holoenzyme"/>
    <property type="evidence" value="ECO:0000269"/>
    <property type="project" value="PomBase"/>
</dbReference>
<dbReference type="GO" id="GO:0005666">
    <property type="term" value="C:RNA polymerase III complex"/>
    <property type="evidence" value="ECO:0000316"/>
    <property type="project" value="PomBase"/>
</dbReference>
<dbReference type="GO" id="GO:0003677">
    <property type="term" value="F:DNA binding"/>
    <property type="evidence" value="ECO:0007669"/>
    <property type="project" value="InterPro"/>
</dbReference>
<dbReference type="GO" id="GO:0003899">
    <property type="term" value="F:DNA-directed RNA polymerase activity"/>
    <property type="evidence" value="ECO:0007669"/>
    <property type="project" value="InterPro"/>
</dbReference>
<dbReference type="GO" id="GO:0008270">
    <property type="term" value="F:zinc ion binding"/>
    <property type="evidence" value="ECO:0000318"/>
    <property type="project" value="GO_Central"/>
</dbReference>
<dbReference type="GO" id="GO:0006360">
    <property type="term" value="P:transcription by RNA polymerase I"/>
    <property type="evidence" value="ECO:0000316"/>
    <property type="project" value="PomBase"/>
</dbReference>
<dbReference type="GO" id="GO:0006366">
    <property type="term" value="P:transcription by RNA polymerase II"/>
    <property type="evidence" value="ECO:0000316"/>
    <property type="project" value="PomBase"/>
</dbReference>
<dbReference type="GO" id="GO:0006383">
    <property type="term" value="P:transcription by RNA polymerase III"/>
    <property type="evidence" value="ECO:0000316"/>
    <property type="project" value="PomBase"/>
</dbReference>
<dbReference type="GO" id="GO:0006362">
    <property type="term" value="P:transcription elongation by RNA polymerase I"/>
    <property type="evidence" value="ECO:0000269"/>
    <property type="project" value="PomBase"/>
</dbReference>
<dbReference type="GO" id="GO:0006367">
    <property type="term" value="P:transcription initiation at RNA polymerase II promoter"/>
    <property type="evidence" value="ECO:0000314"/>
    <property type="project" value="PomBase"/>
</dbReference>
<dbReference type="GO" id="GO:0042797">
    <property type="term" value="P:tRNA transcription by RNA polymerase III"/>
    <property type="evidence" value="ECO:0000318"/>
    <property type="project" value="GO_Central"/>
</dbReference>
<dbReference type="FunFam" id="1.10.10.60:FF:000024">
    <property type="entry name" value="DNA-directed RNA polymerases I, II, and III subunit"/>
    <property type="match status" value="1"/>
</dbReference>
<dbReference type="Gene3D" id="1.10.10.60">
    <property type="entry name" value="Homeodomain-like"/>
    <property type="match status" value="1"/>
</dbReference>
<dbReference type="HAMAP" id="MF_00250">
    <property type="entry name" value="RNApol_arch_Rpo10"/>
    <property type="match status" value="1"/>
</dbReference>
<dbReference type="InterPro" id="IPR023580">
    <property type="entry name" value="RNA_pol_su_RPB10"/>
</dbReference>
<dbReference type="InterPro" id="IPR020789">
    <property type="entry name" value="RNA_pol_suN_Zn-BS"/>
</dbReference>
<dbReference type="InterPro" id="IPR000268">
    <property type="entry name" value="RPABC5/Rpb10"/>
</dbReference>
<dbReference type="NCBIfam" id="NF003089">
    <property type="entry name" value="PRK04016.1"/>
    <property type="match status" value="1"/>
</dbReference>
<dbReference type="PANTHER" id="PTHR23431:SF3">
    <property type="entry name" value="DNA-DIRECTED RNA POLYMERASES I, II, AND III SUBUNIT RPABC5"/>
    <property type="match status" value="1"/>
</dbReference>
<dbReference type="PANTHER" id="PTHR23431">
    <property type="entry name" value="DNA-DIRECTED RNA POLYMERASES I, II, AND III SUBUNIT RPABC5 FAMILY MEMBER"/>
    <property type="match status" value="1"/>
</dbReference>
<dbReference type="Pfam" id="PF01194">
    <property type="entry name" value="RNA_pol_N"/>
    <property type="match status" value="1"/>
</dbReference>
<dbReference type="PIRSF" id="PIRSF005653">
    <property type="entry name" value="RNA_pol_N/8_sub"/>
    <property type="match status" value="1"/>
</dbReference>
<dbReference type="SUPFAM" id="SSF46924">
    <property type="entry name" value="RNA polymerase subunit RPB10"/>
    <property type="match status" value="1"/>
</dbReference>
<dbReference type="PROSITE" id="PS01112">
    <property type="entry name" value="RNA_POL_N_8KD"/>
    <property type="match status" value="1"/>
</dbReference>
<proteinExistence type="evidence at protein level"/>